<organism>
    <name type="scientific">Budgerigar fledgling disease virus</name>
    <name type="common">BFPyV</name>
    <name type="synonym">Aves polyomavirus 1</name>
    <dbReference type="NCBI Taxonomy" id="1891747"/>
    <lineage>
        <taxon>Viruses</taxon>
        <taxon>Monodnaviria</taxon>
        <taxon>Shotokuvirae</taxon>
        <taxon>Cossaviricota</taxon>
        <taxon>Papovaviricetes</taxon>
        <taxon>Sepolyvirales</taxon>
        <taxon>Polyomaviridae</taxon>
        <taxon>Gammapolyomavirus</taxon>
    </lineage>
</organism>
<name>AGNO1_BFPYV</name>
<sequence>MSTPARDPNTAGTAALSPFSTPNHELRAPGPGEAHSPFTPTAAPGSQPAGSLSDPEDGPDPTFNFYIQGHRRRPYDRQNRFGKLESEIRETKSQLETLRQELKHLQADVDDLKETVYAAGTSTASTSVPPSQPNSPTPTATTPEASPAAPTTESTETTGPSVATNATEPSESRPAR</sequence>
<organismHost>
    <name type="scientific">Psittacidae</name>
    <name type="common">parrots</name>
    <dbReference type="NCBI Taxonomy" id="9224"/>
</organismHost>
<keyword id="KW-0024">Alternative initiation</keyword>
<keyword id="KW-0025">Alternative splicing</keyword>
<keyword id="KW-0175">Coiled coil</keyword>
<keyword id="KW-1048">Host nucleus</keyword>
<keyword id="KW-0945">Host-virus interaction</keyword>
<keyword id="KW-0597">Phosphoprotein</keyword>
<keyword id="KW-0946">Virion</keyword>
<evidence type="ECO:0000255" key="1"/>
<evidence type="ECO:0000256" key="2">
    <source>
        <dbReference type="SAM" id="MobiDB-lite"/>
    </source>
</evidence>
<evidence type="ECO:0000269" key="3">
    <source>
    </source>
</evidence>
<evidence type="ECO:0000269" key="4">
    <source>
    </source>
</evidence>
<evidence type="ECO:0000305" key="5"/>
<accession>A6QL29</accession>
<accession>A6QL30</accession>
<dbReference type="EMBL" id="AY672646">
    <property type="protein sequence ID" value="AAW52589.1"/>
    <property type="molecule type" value="Genomic_DNA"/>
</dbReference>
<dbReference type="EMBL" id="AY672646">
    <property type="protein sequence ID" value="AAW52590.1"/>
    <property type="molecule type" value="Genomic_DNA"/>
</dbReference>
<dbReference type="SMR" id="A6QL29"/>
<dbReference type="Proteomes" id="UP000144582">
    <property type="component" value="Genome"/>
</dbReference>
<dbReference type="GO" id="GO:0042025">
    <property type="term" value="C:host cell nucleus"/>
    <property type="evidence" value="ECO:0007669"/>
    <property type="project" value="UniProtKB-SubCell"/>
</dbReference>
<dbReference type="GO" id="GO:0044423">
    <property type="term" value="C:virion component"/>
    <property type="evidence" value="ECO:0007669"/>
    <property type="project" value="UniProtKB-KW"/>
</dbReference>
<proteinExistence type="evidence at protein level"/>
<reference key="1">
    <citation type="submission" date="2004-06" db="EMBL/GenBank/DDBJ databases">
        <title>The genome of budgerigar fledgling disease virus.</title>
        <authorList>
            <person name="Li T."/>
            <person name="Kou Z."/>
            <person name="Fan Z."/>
            <person name="Chen S."/>
            <person name="Xiong K."/>
            <person name="Zhang Z."/>
        </authorList>
    </citation>
    <scope>NUCLEOTIDE SEQUENCE [GENOMIC DNA]</scope>
</reference>
<reference key="2">
    <citation type="journal article" date="1995" name="J. Gen. Virol.">
        <title>Early and late pre-mRNA processing of budgerigar fledgling disease virus 1: identification of viral RNA 5' and 3' ends and internal splice junctions.</title>
        <authorList>
            <person name="Luo D."/>
            <person name="Muller H."/>
            <person name="Tang X.B."/>
            <person name="Hobom G."/>
        </authorList>
    </citation>
    <scope>ISOFORM AGNO-1B</scope>
</reference>
<reference key="3">
    <citation type="journal article" date="2000" name="J. Gen. Virol.">
        <title>Agnoprotein-1a of avian polyomavirus budgerigar fledgling disease virus: identification of phosphorylation sites and functional importance in the virus life-cycle.</title>
        <authorList>
            <person name="Liu Q."/>
            <person name="Hobom G."/>
        </authorList>
    </citation>
    <scope>MUTAGENESIS OF SER-53; SER-93; THR-97; PRO-136; THR-137; 141-THR-THR-142 AND PRO-147</scope>
</reference>
<reference key="4">
    <citation type="journal article" date="2001" name="J. Gen. Virol.">
        <title>Avian polyomavirus agnoprotein 1a is incorporated into the virus particle as a fourth structural protein, VP4.</title>
        <authorList>
            <person name="Johne R."/>
            <person name="Muller H."/>
        </authorList>
    </citation>
    <scope>FUNCTION</scope>
    <scope>SUBCELLULAR LOCATION</scope>
    <scope>INTERACTION WITH VP1</scope>
</reference>
<feature type="chain" id="PRO_0000356261" description="Avian agnoprotein 1a">
    <location>
        <begin position="1"/>
        <end position="176"/>
    </location>
</feature>
<feature type="region of interest" description="Disordered" evidence="2">
    <location>
        <begin position="1"/>
        <end position="85"/>
    </location>
</feature>
<feature type="region of interest" description="Disordered" evidence="2">
    <location>
        <begin position="116"/>
        <end position="176"/>
    </location>
</feature>
<feature type="coiled-coil region" evidence="1">
    <location>
        <begin position="76"/>
        <end position="119"/>
    </location>
</feature>
<feature type="compositionally biased region" description="Basic and acidic residues" evidence="2">
    <location>
        <begin position="75"/>
        <end position="85"/>
    </location>
</feature>
<feature type="compositionally biased region" description="Low complexity" evidence="2">
    <location>
        <begin position="137"/>
        <end position="161"/>
    </location>
</feature>
<feature type="splice variant" id="VSP_036021" description="In isoform Agno-1b." evidence="5">
    <location>
        <begin position="69"/>
        <end position="132"/>
    </location>
</feature>
<feature type="mutagenesis site" description="80% loss of viral structural genes VP1, VP2 and VP3 expression." evidence="3">
    <original>S</original>
    <variation>A</variation>
    <location>
        <position position="53"/>
    </location>
</feature>
<feature type="mutagenesis site" description="80% loss of viral structural genes VP1, VP2 and VP3 expression." evidence="3">
    <original>S</original>
    <variation>L</variation>
    <location>
        <position position="93"/>
    </location>
</feature>
<feature type="mutagenesis site" description="Complete loss of VP1, VP2 and VP3 expression." evidence="3">
    <original>T</original>
    <variation>A</variation>
    <location>
        <position position="97"/>
    </location>
</feature>
<feature type="mutagenesis site" description="Complete loss of VP1, VP2 and VP3 expression." evidence="3">
    <original>P</original>
    <variation>A</variation>
    <location>
        <position position="136"/>
    </location>
</feature>
<feature type="mutagenesis site" description="Complete loss of VP1, VP2 and VP3 expression." evidence="3">
    <original>T</original>
    <variation>A</variation>
    <location>
        <position position="137"/>
    </location>
</feature>
<feature type="mutagenesis site" description="Complete loss of VP1, VP2 and VP3 expression." evidence="3">
    <original>TT</original>
    <variation>GA</variation>
    <location>
        <begin position="141"/>
        <end position="142"/>
    </location>
</feature>
<feature type="mutagenesis site" description="80% loss of viral structural genes VP1, VP2 and VP3 expression." evidence="3">
    <original>P</original>
    <variation>A</variation>
    <location>
        <position position="147"/>
    </location>
</feature>
<protein>
    <recommendedName>
        <fullName>Avian agnoprotein 1a</fullName>
    </recommendedName>
    <alternativeName>
        <fullName>Agno-1a</fullName>
    </alternativeName>
</protein>
<comment type="subunit">
    <text evidence="4">Interacts with VP1.</text>
</comment>
<comment type="subcellular location">
    <subcellularLocation>
        <location evidence="4">Virion</location>
    </subcellularLocation>
    <subcellularLocation>
        <location evidence="4">Host nucleus</location>
    </subcellularLocation>
</comment>
<comment type="alternative products">
    <event type="alternative splicing"/>
    <event type="alternative initiation"/>
    <isoform>
        <id>A6QL29-1</id>
        <name>Agno-1a</name>
        <sequence type="displayed"/>
    </isoform>
    <isoform>
        <id>A6QL29-2</id>
        <name>Agno-1b</name>
        <sequence type="described" ref="VSP_036021"/>
    </isoform>
    <isoform>
        <id>P13893-1</id>
        <name>Agno-2b</name>
        <sequence type="external"/>
    </isoform>
    <isoform>
        <id>P13893-2</id>
        <name>Agno-2a</name>
        <sequence type="external"/>
    </isoform>
    <isoform>
        <id>P13891-1</id>
        <name>VP1</name>
        <sequence type="external"/>
    </isoform>
    <isoform>
        <id>P13892-1</id>
        <name>VP2</name>
        <name>Minor capsid protein VP2</name>
        <sequence type="external"/>
    </isoform>
    <isoform>
        <id>P13892-2</id>
        <name>VP3</name>
        <name>Minor capsid protein VP3</name>
        <sequence type="external"/>
    </isoform>
</comment>
<comment type="miscellaneous">
    <molecule>Isoform Agno-1a</molecule>
    <text>Produced by alternative initiation of the late mRNA.</text>
</comment>
<comment type="miscellaneous">
    <molecule>Isoform Agno-1b</molecule>
    <text evidence="5">Produced by alternative splicing of the late mRNA.</text>
</comment>
<comment type="caution">
    <text evidence="5">Encoded by the same late mRNA leader region, but is very different from primate polyomavirus agnoproteins.</text>
</comment>